<proteinExistence type="inferred from homology"/>
<dbReference type="EMBL" id="AP006716">
    <property type="protein sequence ID" value="BAE04809.1"/>
    <property type="molecule type" value="Genomic_DNA"/>
</dbReference>
<dbReference type="RefSeq" id="WP_011275794.1">
    <property type="nucleotide sequence ID" value="NC_007168.1"/>
</dbReference>
<dbReference type="SMR" id="Q4L6B6"/>
<dbReference type="KEGG" id="sha:SH1500"/>
<dbReference type="eggNOG" id="COG0714">
    <property type="taxonomic scope" value="Bacteria"/>
</dbReference>
<dbReference type="HOGENOM" id="CLU_080347_0_0_9"/>
<dbReference type="OrthoDB" id="9808317at2"/>
<dbReference type="Proteomes" id="UP000000543">
    <property type="component" value="Chromosome"/>
</dbReference>
<dbReference type="GO" id="GO:0005524">
    <property type="term" value="F:ATP binding"/>
    <property type="evidence" value="ECO:0007669"/>
    <property type="project" value="UniProtKB-KW"/>
</dbReference>
<dbReference type="GO" id="GO:0016887">
    <property type="term" value="F:ATP hydrolysis activity"/>
    <property type="evidence" value="ECO:0007669"/>
    <property type="project" value="InterPro"/>
</dbReference>
<dbReference type="CDD" id="cd00009">
    <property type="entry name" value="AAA"/>
    <property type="match status" value="1"/>
</dbReference>
<dbReference type="Gene3D" id="3.40.50.300">
    <property type="entry name" value="P-loop containing nucleotide triphosphate hydrolases"/>
    <property type="match status" value="1"/>
</dbReference>
<dbReference type="InterPro" id="IPR003593">
    <property type="entry name" value="AAA+_ATPase"/>
</dbReference>
<dbReference type="InterPro" id="IPR011704">
    <property type="entry name" value="ATPase_dyneun-rel_AAA"/>
</dbReference>
<dbReference type="InterPro" id="IPR050764">
    <property type="entry name" value="CbbQ/NirQ/NorQ/GpvN"/>
</dbReference>
<dbReference type="InterPro" id="IPR013615">
    <property type="entry name" value="CbbQ_C"/>
</dbReference>
<dbReference type="InterPro" id="IPR001270">
    <property type="entry name" value="ClpA/B"/>
</dbReference>
<dbReference type="InterPro" id="IPR027417">
    <property type="entry name" value="P-loop_NTPase"/>
</dbReference>
<dbReference type="PANTHER" id="PTHR42759:SF1">
    <property type="entry name" value="MAGNESIUM-CHELATASE SUBUNIT CHLD"/>
    <property type="match status" value="1"/>
</dbReference>
<dbReference type="PANTHER" id="PTHR42759">
    <property type="entry name" value="MOXR FAMILY PROTEIN"/>
    <property type="match status" value="1"/>
</dbReference>
<dbReference type="Pfam" id="PF07728">
    <property type="entry name" value="AAA_5"/>
    <property type="match status" value="1"/>
</dbReference>
<dbReference type="Pfam" id="PF08406">
    <property type="entry name" value="CbbQ_C"/>
    <property type="match status" value="1"/>
</dbReference>
<dbReference type="PRINTS" id="PR00300">
    <property type="entry name" value="CLPPROTEASEA"/>
</dbReference>
<dbReference type="SMART" id="SM00382">
    <property type="entry name" value="AAA"/>
    <property type="match status" value="1"/>
</dbReference>
<dbReference type="SUPFAM" id="SSF52540">
    <property type="entry name" value="P-loop containing nucleoside triphosphate hydrolases"/>
    <property type="match status" value="1"/>
</dbReference>
<evidence type="ECO:0000255" key="1"/>
<evidence type="ECO:0000305" key="2"/>
<feature type="chain" id="PRO_0000284816" description="Uncharacterized protein SH1500">
    <location>
        <begin position="1"/>
        <end position="263"/>
    </location>
</feature>
<feature type="binding site" evidence="1">
    <location>
        <begin position="31"/>
        <end position="38"/>
    </location>
    <ligand>
        <name>ATP</name>
        <dbReference type="ChEBI" id="CHEBI:30616"/>
    </ligand>
</feature>
<organism>
    <name type="scientific">Staphylococcus haemolyticus (strain JCSC1435)</name>
    <dbReference type="NCBI Taxonomy" id="279808"/>
    <lineage>
        <taxon>Bacteria</taxon>
        <taxon>Bacillati</taxon>
        <taxon>Bacillota</taxon>
        <taxon>Bacilli</taxon>
        <taxon>Bacillales</taxon>
        <taxon>Staphylococcaceae</taxon>
        <taxon>Staphylococcus</taxon>
    </lineage>
</organism>
<comment type="similarity">
    <text evidence="2">Belongs to the CbbQ/NirQ/NorQ/GpvN family.</text>
</comment>
<protein>
    <recommendedName>
        <fullName>Uncharacterized protein SH1500</fullName>
    </recommendedName>
</protein>
<keyword id="KW-0067">ATP-binding</keyword>
<keyword id="KW-0547">Nucleotide-binding</keyword>
<sequence>MIKNQYINSDESVFNDAKALFNLNKNILLKGPTGSGKTKLAETLSAAVNTPMHQVNCSVDLDAESLLGFKTIKTNEQGQQEIVFIDGPVIKAMREGHILYIDEINMAKPETLPILNGVLDYRRQLTNPFTGEVIKAAPGFNVIAAINEGYVGTLPMNEALKNRFVVIQVDYIDGDILKDVIKQQSQLQDDAIIEQIIKFNEDLRTMSKQGQISEEAASIRALIDLSDLITVMPIERAIKRTIIDKLEDEREQQAIKNAIELNF</sequence>
<name>Y1500_STAHJ</name>
<gene>
    <name type="ordered locus">SH1500</name>
</gene>
<accession>Q4L6B6</accession>
<reference key="1">
    <citation type="journal article" date="2005" name="J. Bacteriol.">
        <title>Whole-genome sequencing of Staphylococcus haemolyticus uncovers the extreme plasticity of its genome and the evolution of human-colonizing staphylococcal species.</title>
        <authorList>
            <person name="Takeuchi F."/>
            <person name="Watanabe S."/>
            <person name="Baba T."/>
            <person name="Yuzawa H."/>
            <person name="Ito T."/>
            <person name="Morimoto Y."/>
            <person name="Kuroda M."/>
            <person name="Cui L."/>
            <person name="Takahashi M."/>
            <person name="Ankai A."/>
            <person name="Baba S."/>
            <person name="Fukui S."/>
            <person name="Lee J.C."/>
            <person name="Hiramatsu K."/>
        </authorList>
    </citation>
    <scope>NUCLEOTIDE SEQUENCE [LARGE SCALE GENOMIC DNA]</scope>
    <source>
        <strain>JCSC1435</strain>
    </source>
</reference>